<sequence length="201" mass="21549">MRTGEVHRHTGETDVKVKLDLDGSGCCEASTGVPFLDHMLNQISSHGLIDLTITAVGDTHIDDHHTNEDVGIAVGQALSQALGDRKGIHRFGHFVAPLDEALVQVALDCSGRPHISYGLTIPTQKIGSYDTELVKEFFVAVANNSGLTLHIRQLDGVNSHHIVEACFKAFARALRMATEIDPRRAGAIPSSKGVLEQAGAN</sequence>
<dbReference type="EC" id="4.2.1.19" evidence="1"/>
<dbReference type="EMBL" id="CP000097">
    <property type="protein sequence ID" value="ABB25222.1"/>
    <property type="molecule type" value="Genomic_DNA"/>
</dbReference>
<dbReference type="RefSeq" id="WP_011359083.1">
    <property type="nucleotide sequence ID" value="NC_007513.1"/>
</dbReference>
<dbReference type="SMR" id="Q3B0A6"/>
<dbReference type="STRING" id="316279.Syncc9902_0247"/>
<dbReference type="KEGG" id="sye:Syncc9902_0247"/>
<dbReference type="eggNOG" id="COG0131">
    <property type="taxonomic scope" value="Bacteria"/>
</dbReference>
<dbReference type="HOGENOM" id="CLU_044308_3_0_3"/>
<dbReference type="OrthoDB" id="9790411at2"/>
<dbReference type="UniPathway" id="UPA00031">
    <property type="reaction ID" value="UER00011"/>
</dbReference>
<dbReference type="Proteomes" id="UP000002712">
    <property type="component" value="Chromosome"/>
</dbReference>
<dbReference type="GO" id="GO:0005737">
    <property type="term" value="C:cytoplasm"/>
    <property type="evidence" value="ECO:0007669"/>
    <property type="project" value="UniProtKB-SubCell"/>
</dbReference>
<dbReference type="GO" id="GO:0004424">
    <property type="term" value="F:imidazoleglycerol-phosphate dehydratase activity"/>
    <property type="evidence" value="ECO:0007669"/>
    <property type="project" value="UniProtKB-UniRule"/>
</dbReference>
<dbReference type="GO" id="GO:0000105">
    <property type="term" value="P:L-histidine biosynthetic process"/>
    <property type="evidence" value="ECO:0007669"/>
    <property type="project" value="UniProtKB-UniRule"/>
</dbReference>
<dbReference type="CDD" id="cd07914">
    <property type="entry name" value="IGPD"/>
    <property type="match status" value="1"/>
</dbReference>
<dbReference type="FunFam" id="3.30.230.40:FF:000002">
    <property type="entry name" value="Imidazoleglycerol-phosphate dehydratase"/>
    <property type="match status" value="1"/>
</dbReference>
<dbReference type="FunFam" id="3.30.230.40:FF:000003">
    <property type="entry name" value="Imidazoleglycerol-phosphate dehydratase HisB"/>
    <property type="match status" value="1"/>
</dbReference>
<dbReference type="Gene3D" id="3.30.230.40">
    <property type="entry name" value="Imidazole glycerol phosphate dehydratase, domain 1"/>
    <property type="match status" value="2"/>
</dbReference>
<dbReference type="HAMAP" id="MF_00076">
    <property type="entry name" value="HisB"/>
    <property type="match status" value="1"/>
</dbReference>
<dbReference type="InterPro" id="IPR038494">
    <property type="entry name" value="IGPD_sf"/>
</dbReference>
<dbReference type="InterPro" id="IPR000807">
    <property type="entry name" value="ImidazoleglycerolP_deHydtase"/>
</dbReference>
<dbReference type="InterPro" id="IPR020565">
    <property type="entry name" value="ImidazoleglycerP_deHydtase_CS"/>
</dbReference>
<dbReference type="InterPro" id="IPR020568">
    <property type="entry name" value="Ribosomal_Su5_D2-typ_SF"/>
</dbReference>
<dbReference type="NCBIfam" id="NF002108">
    <property type="entry name" value="PRK00951.1-3"/>
    <property type="match status" value="1"/>
</dbReference>
<dbReference type="NCBIfam" id="NF002109">
    <property type="entry name" value="PRK00951.1-5"/>
    <property type="match status" value="1"/>
</dbReference>
<dbReference type="NCBIfam" id="NF002111">
    <property type="entry name" value="PRK00951.2-1"/>
    <property type="match status" value="1"/>
</dbReference>
<dbReference type="NCBIfam" id="NF002114">
    <property type="entry name" value="PRK00951.2-4"/>
    <property type="match status" value="1"/>
</dbReference>
<dbReference type="PANTHER" id="PTHR23133:SF2">
    <property type="entry name" value="IMIDAZOLEGLYCEROL-PHOSPHATE DEHYDRATASE"/>
    <property type="match status" value="1"/>
</dbReference>
<dbReference type="PANTHER" id="PTHR23133">
    <property type="entry name" value="IMIDAZOLEGLYCEROL-PHOSPHATE DEHYDRATASE HIS7"/>
    <property type="match status" value="1"/>
</dbReference>
<dbReference type="Pfam" id="PF00475">
    <property type="entry name" value="IGPD"/>
    <property type="match status" value="1"/>
</dbReference>
<dbReference type="SUPFAM" id="SSF54211">
    <property type="entry name" value="Ribosomal protein S5 domain 2-like"/>
    <property type="match status" value="2"/>
</dbReference>
<dbReference type="PROSITE" id="PS00954">
    <property type="entry name" value="IGP_DEHYDRATASE_1"/>
    <property type="match status" value="1"/>
</dbReference>
<dbReference type="PROSITE" id="PS00955">
    <property type="entry name" value="IGP_DEHYDRATASE_2"/>
    <property type="match status" value="1"/>
</dbReference>
<accession>Q3B0A6</accession>
<gene>
    <name evidence="1" type="primary">hisB</name>
    <name type="ordered locus">Syncc9902_0247</name>
</gene>
<organism>
    <name type="scientific">Synechococcus sp. (strain CC9902)</name>
    <dbReference type="NCBI Taxonomy" id="316279"/>
    <lineage>
        <taxon>Bacteria</taxon>
        <taxon>Bacillati</taxon>
        <taxon>Cyanobacteriota</taxon>
        <taxon>Cyanophyceae</taxon>
        <taxon>Synechococcales</taxon>
        <taxon>Synechococcaceae</taxon>
        <taxon>Synechococcus</taxon>
    </lineage>
</organism>
<keyword id="KW-0028">Amino-acid biosynthesis</keyword>
<keyword id="KW-0963">Cytoplasm</keyword>
<keyword id="KW-0368">Histidine biosynthesis</keyword>
<keyword id="KW-0456">Lyase</keyword>
<keyword id="KW-1185">Reference proteome</keyword>
<proteinExistence type="inferred from homology"/>
<comment type="catalytic activity">
    <reaction evidence="1">
        <text>D-erythro-1-(imidazol-4-yl)glycerol 3-phosphate = 3-(imidazol-4-yl)-2-oxopropyl phosphate + H2O</text>
        <dbReference type="Rhea" id="RHEA:11040"/>
        <dbReference type="ChEBI" id="CHEBI:15377"/>
        <dbReference type="ChEBI" id="CHEBI:57766"/>
        <dbReference type="ChEBI" id="CHEBI:58278"/>
        <dbReference type="EC" id="4.2.1.19"/>
    </reaction>
</comment>
<comment type="pathway">
    <text evidence="1">Amino-acid biosynthesis; L-histidine biosynthesis; L-histidine from 5-phospho-alpha-D-ribose 1-diphosphate: step 6/9.</text>
</comment>
<comment type="subcellular location">
    <subcellularLocation>
        <location evidence="1">Cytoplasm</location>
    </subcellularLocation>
</comment>
<comment type="similarity">
    <text evidence="1">Belongs to the imidazoleglycerol-phosphate dehydratase family.</text>
</comment>
<name>HIS7_SYNS9</name>
<reference key="1">
    <citation type="submission" date="2005-08" db="EMBL/GenBank/DDBJ databases">
        <title>Complete sequence of Synechococcus sp. CC9902.</title>
        <authorList>
            <person name="Copeland A."/>
            <person name="Lucas S."/>
            <person name="Lapidus A."/>
            <person name="Barry K."/>
            <person name="Detter J.C."/>
            <person name="Glavina T."/>
            <person name="Hammon N."/>
            <person name="Israni S."/>
            <person name="Pitluck S."/>
            <person name="Martinez M."/>
            <person name="Schmutz J."/>
            <person name="Larimer F."/>
            <person name="Land M."/>
            <person name="Kyrpides N."/>
            <person name="Ivanova N."/>
            <person name="Richardson P."/>
        </authorList>
    </citation>
    <scope>NUCLEOTIDE SEQUENCE [LARGE SCALE GENOMIC DNA]</scope>
    <source>
        <strain>CC9902</strain>
    </source>
</reference>
<feature type="chain" id="PRO_0000336348" description="Imidazoleglycerol-phosphate dehydratase">
    <location>
        <begin position="1"/>
        <end position="201"/>
    </location>
</feature>
<protein>
    <recommendedName>
        <fullName evidence="1">Imidazoleglycerol-phosphate dehydratase</fullName>
        <shortName evidence="1">IGPD</shortName>
        <ecNumber evidence="1">4.2.1.19</ecNumber>
    </recommendedName>
</protein>
<evidence type="ECO:0000255" key="1">
    <source>
        <dbReference type="HAMAP-Rule" id="MF_00076"/>
    </source>
</evidence>